<dbReference type="EMBL" id="CP000046">
    <property type="protein sequence ID" value="AAW38685.1"/>
    <property type="molecule type" value="Genomic_DNA"/>
</dbReference>
<dbReference type="RefSeq" id="WP_000653261.1">
    <property type="nucleotide sequence ID" value="NZ_JBGOFO010000001.1"/>
</dbReference>
<dbReference type="PDB" id="3GEU">
    <property type="method" value="X-ray"/>
    <property type="resolution" value="1.90 A"/>
    <property type="chains" value="A/B/C/D=1-186"/>
</dbReference>
<dbReference type="PDBsum" id="3GEU"/>
<dbReference type="SMR" id="Q5HCN2"/>
<dbReference type="KEGG" id="sac:SACOL2688"/>
<dbReference type="HOGENOM" id="CLU_124987_0_0_9"/>
<dbReference type="EvolutionaryTrace" id="Q5HCN2"/>
<dbReference type="Proteomes" id="UP000000530">
    <property type="component" value="Chromosome"/>
</dbReference>
<dbReference type="GO" id="GO:0003677">
    <property type="term" value="F:DNA binding"/>
    <property type="evidence" value="ECO:0007669"/>
    <property type="project" value="UniProtKB-KW"/>
</dbReference>
<dbReference type="Gene3D" id="1.10.357.10">
    <property type="entry name" value="Tetracycline Repressor, domain 2"/>
    <property type="match status" value="1"/>
</dbReference>
<dbReference type="InterPro" id="IPR009057">
    <property type="entry name" value="Homeodomain-like_sf"/>
</dbReference>
<dbReference type="InterPro" id="IPR050624">
    <property type="entry name" value="HTH-type_Tx_Regulator"/>
</dbReference>
<dbReference type="InterPro" id="IPR001647">
    <property type="entry name" value="HTH_TetR"/>
</dbReference>
<dbReference type="InterPro" id="IPR041646">
    <property type="entry name" value="IcaR_C"/>
</dbReference>
<dbReference type="PANTHER" id="PTHR43479">
    <property type="entry name" value="ACREF/ENVCD OPERON REPRESSOR-RELATED"/>
    <property type="match status" value="1"/>
</dbReference>
<dbReference type="PANTHER" id="PTHR43479:SF11">
    <property type="entry name" value="ACREF_ENVCD OPERON REPRESSOR-RELATED"/>
    <property type="match status" value="1"/>
</dbReference>
<dbReference type="Pfam" id="PF18665">
    <property type="entry name" value="TetR_C_37"/>
    <property type="match status" value="1"/>
</dbReference>
<dbReference type="Pfam" id="PF00440">
    <property type="entry name" value="TetR_N"/>
    <property type="match status" value="1"/>
</dbReference>
<dbReference type="PRINTS" id="PR00455">
    <property type="entry name" value="HTHTETR"/>
</dbReference>
<dbReference type="SUPFAM" id="SSF46689">
    <property type="entry name" value="Homeodomain-like"/>
    <property type="match status" value="1"/>
</dbReference>
<dbReference type="PROSITE" id="PS50977">
    <property type="entry name" value="HTH_TETR_2"/>
    <property type="match status" value="1"/>
</dbReference>
<reference key="1">
    <citation type="journal article" date="2005" name="J. Bacteriol.">
        <title>Insights on evolution of virulence and resistance from the complete genome analysis of an early methicillin-resistant Staphylococcus aureus strain and a biofilm-producing methicillin-resistant Staphylococcus epidermidis strain.</title>
        <authorList>
            <person name="Gill S.R."/>
            <person name="Fouts D.E."/>
            <person name="Archer G.L."/>
            <person name="Mongodin E.F."/>
            <person name="DeBoy R.T."/>
            <person name="Ravel J."/>
            <person name="Paulsen I.T."/>
            <person name="Kolonay J.F."/>
            <person name="Brinkac L.M."/>
            <person name="Beanan M.J."/>
            <person name="Dodson R.J."/>
            <person name="Daugherty S.C."/>
            <person name="Madupu R."/>
            <person name="Angiuoli S.V."/>
            <person name="Durkin A.S."/>
            <person name="Haft D.H."/>
            <person name="Vamathevan J.J."/>
            <person name="Khouri H."/>
            <person name="Utterback T.R."/>
            <person name="Lee C."/>
            <person name="Dimitrov G."/>
            <person name="Jiang L."/>
            <person name="Qin H."/>
            <person name="Weidman J."/>
            <person name="Tran K."/>
            <person name="Kang K.H."/>
            <person name="Hance I.R."/>
            <person name="Nelson K.E."/>
            <person name="Fraser C.M."/>
        </authorList>
    </citation>
    <scope>NUCLEOTIDE SEQUENCE [LARGE SCALE GENOMIC DNA]</scope>
    <source>
        <strain>COL</strain>
    </source>
</reference>
<reference key="2">
    <citation type="submission" date="2009-03" db="PDB data bank">
        <title>Crystal structure of icaR from Staphylococcus aureus, a member of the tetracycline repressor protein family.</title>
        <authorList>
            <consortium name="Center for structural genomics of infectious diseases (CSGID)"/>
        </authorList>
    </citation>
    <scope>X-RAY CRYSTALLOGRAPHY (1.9 ANGSTROMS)</scope>
    <scope>SUBUNIT</scope>
</reference>
<gene>
    <name type="primary">icaR</name>
    <name type="ordered locus">SACOL2688</name>
</gene>
<feature type="chain" id="PRO_0000070597" description="Biofilm operon icaADBC HTH-type negative transcriptional regulator IcaR">
    <location>
        <begin position="1"/>
        <end position="186"/>
    </location>
</feature>
<feature type="domain" description="HTH tetR-type" evidence="2">
    <location>
        <begin position="1"/>
        <end position="59"/>
    </location>
</feature>
<feature type="DNA-binding region" description="H-T-H motif" evidence="2">
    <location>
        <begin position="22"/>
        <end position="41"/>
    </location>
</feature>
<feature type="helix" evidence="4">
    <location>
        <begin position="1"/>
        <end position="20"/>
    </location>
</feature>
<feature type="helix" evidence="4">
    <location>
        <begin position="23"/>
        <end position="29"/>
    </location>
</feature>
<feature type="helix" evidence="4">
    <location>
        <begin position="34"/>
        <end position="37"/>
    </location>
</feature>
<feature type="turn" evidence="4">
    <location>
        <begin position="38"/>
        <end position="40"/>
    </location>
</feature>
<feature type="helix" evidence="4">
    <location>
        <begin position="44"/>
        <end position="69"/>
    </location>
</feature>
<feature type="helix" evidence="4">
    <location>
        <begin position="74"/>
        <end position="87"/>
    </location>
</feature>
<feature type="helix" evidence="4">
    <location>
        <begin position="90"/>
        <end position="98"/>
    </location>
</feature>
<feature type="helix" evidence="4">
    <location>
        <begin position="99"/>
        <end position="101"/>
    </location>
</feature>
<feature type="helix" evidence="4">
    <location>
        <begin position="104"/>
        <end position="106"/>
    </location>
</feature>
<feature type="helix" evidence="4">
    <location>
        <begin position="110"/>
        <end position="126"/>
    </location>
</feature>
<feature type="turn" evidence="4">
    <location>
        <begin position="131"/>
        <end position="133"/>
    </location>
</feature>
<feature type="helix" evidence="4">
    <location>
        <begin position="138"/>
        <end position="161"/>
    </location>
</feature>
<feature type="helix" evidence="4">
    <location>
        <begin position="165"/>
        <end position="180"/>
    </location>
</feature>
<feature type="helix" evidence="4">
    <location>
        <begin position="181"/>
        <end position="183"/>
    </location>
</feature>
<protein>
    <recommendedName>
        <fullName>Biofilm operon icaADBC HTH-type negative transcriptional regulator IcaR</fullName>
    </recommendedName>
    <alternativeName>
        <fullName>Intercellular adhesion protein R</fullName>
    </alternativeName>
</protein>
<name>ICAR_STAAC</name>
<proteinExistence type="evidence at protein level"/>
<organism>
    <name type="scientific">Staphylococcus aureus (strain COL)</name>
    <dbReference type="NCBI Taxonomy" id="93062"/>
    <lineage>
        <taxon>Bacteria</taxon>
        <taxon>Bacillati</taxon>
        <taxon>Bacillota</taxon>
        <taxon>Bacilli</taxon>
        <taxon>Bacillales</taxon>
        <taxon>Staphylococcaceae</taxon>
        <taxon>Staphylococcus</taxon>
    </lineage>
</organism>
<evidence type="ECO:0000250" key="1"/>
<evidence type="ECO:0000255" key="2">
    <source>
        <dbReference type="PROSITE-ProRule" id="PRU00335"/>
    </source>
</evidence>
<evidence type="ECO:0000269" key="3">
    <source ref="2"/>
</evidence>
<evidence type="ECO:0007829" key="4">
    <source>
        <dbReference type="PDB" id="3GEU"/>
    </source>
</evidence>
<keyword id="KW-0002">3D-structure</keyword>
<keyword id="KW-0238">DNA-binding</keyword>
<keyword id="KW-0678">Repressor</keyword>
<keyword id="KW-0804">Transcription</keyword>
<keyword id="KW-0805">Transcription regulation</keyword>
<comment type="function">
    <text evidence="1">Represses transcription of the icaADBC operon necessary for biofilm production.</text>
</comment>
<comment type="subunit">
    <text evidence="3">Homodimer.</text>
</comment>
<comment type="miscellaneous">
    <text evidence="1">Binding to the ica operator DNA involves two IcaR dimers and is highly cooperative.</text>
</comment>
<comment type="miscellaneous">
    <text>In strain COL, the gene icaC is interrupted by a natural frameshift.</text>
</comment>
<sequence length="186" mass="21987">MKDKIIDNAITLFSEKGYDGTTLDDIAKSVNIKKASLYYHFDSKKSIYEQSVKCCFDYLNNIIMMNQNKSNYSIDALYQFLFEFIFDIEERYIRMYVQLSNTPEEFSGNIYGQIQDLNQSLSKEIAKFYDESKIKMTKEDFQNLILLFLESWYLKASFSQKFGAVEESKSQFKDEVYSLLNIFLKK</sequence>
<accession>Q5HCN2</accession>